<proteinExistence type="inferred from homology"/>
<protein>
    <recommendedName>
        <fullName evidence="1">Co-chaperonin GroES</fullName>
    </recommendedName>
    <alternativeName>
        <fullName evidence="1">10 kDa chaperonin</fullName>
    </alternativeName>
    <alternativeName>
        <fullName evidence="1">Chaperonin-10</fullName>
        <shortName evidence="1">Cpn10</shortName>
    </alternativeName>
</protein>
<keyword id="KW-0143">Chaperone</keyword>
<keyword id="KW-0963">Cytoplasm</keyword>
<accession>Q2JUN8</accession>
<organism>
    <name type="scientific">Synechococcus sp. (strain JA-3-3Ab)</name>
    <name type="common">Cyanobacteria bacterium Yellowstone A-Prime</name>
    <dbReference type="NCBI Taxonomy" id="321327"/>
    <lineage>
        <taxon>Bacteria</taxon>
        <taxon>Bacillati</taxon>
        <taxon>Cyanobacteriota</taxon>
        <taxon>Cyanophyceae</taxon>
        <taxon>Synechococcales</taxon>
        <taxon>Synechococcaceae</taxon>
        <taxon>Synechococcus</taxon>
    </lineage>
</organism>
<dbReference type="EMBL" id="CP000239">
    <property type="protein sequence ID" value="ABC99576.1"/>
    <property type="molecule type" value="Genomic_DNA"/>
</dbReference>
<dbReference type="RefSeq" id="WP_011430254.1">
    <property type="nucleotide sequence ID" value="NC_007775.1"/>
</dbReference>
<dbReference type="SMR" id="Q2JUN8"/>
<dbReference type="STRING" id="321327.CYA_1406"/>
<dbReference type="KEGG" id="cya:CYA_1406"/>
<dbReference type="eggNOG" id="COG0234">
    <property type="taxonomic scope" value="Bacteria"/>
</dbReference>
<dbReference type="HOGENOM" id="CLU_132825_2_1_3"/>
<dbReference type="OrthoDB" id="9806791at2"/>
<dbReference type="Proteomes" id="UP000008818">
    <property type="component" value="Chromosome"/>
</dbReference>
<dbReference type="GO" id="GO:0005737">
    <property type="term" value="C:cytoplasm"/>
    <property type="evidence" value="ECO:0007669"/>
    <property type="project" value="UniProtKB-SubCell"/>
</dbReference>
<dbReference type="GO" id="GO:0005524">
    <property type="term" value="F:ATP binding"/>
    <property type="evidence" value="ECO:0007669"/>
    <property type="project" value="InterPro"/>
</dbReference>
<dbReference type="GO" id="GO:0046872">
    <property type="term" value="F:metal ion binding"/>
    <property type="evidence" value="ECO:0007669"/>
    <property type="project" value="TreeGrafter"/>
</dbReference>
<dbReference type="GO" id="GO:0044183">
    <property type="term" value="F:protein folding chaperone"/>
    <property type="evidence" value="ECO:0007669"/>
    <property type="project" value="InterPro"/>
</dbReference>
<dbReference type="GO" id="GO:0051087">
    <property type="term" value="F:protein-folding chaperone binding"/>
    <property type="evidence" value="ECO:0007669"/>
    <property type="project" value="TreeGrafter"/>
</dbReference>
<dbReference type="GO" id="GO:0051082">
    <property type="term" value="F:unfolded protein binding"/>
    <property type="evidence" value="ECO:0007669"/>
    <property type="project" value="TreeGrafter"/>
</dbReference>
<dbReference type="GO" id="GO:0051085">
    <property type="term" value="P:chaperone cofactor-dependent protein refolding"/>
    <property type="evidence" value="ECO:0007669"/>
    <property type="project" value="TreeGrafter"/>
</dbReference>
<dbReference type="CDD" id="cd00320">
    <property type="entry name" value="cpn10"/>
    <property type="match status" value="1"/>
</dbReference>
<dbReference type="FunFam" id="2.30.33.40:FF:000001">
    <property type="entry name" value="10 kDa chaperonin"/>
    <property type="match status" value="1"/>
</dbReference>
<dbReference type="Gene3D" id="2.30.33.40">
    <property type="entry name" value="GroES chaperonin"/>
    <property type="match status" value="1"/>
</dbReference>
<dbReference type="HAMAP" id="MF_00580">
    <property type="entry name" value="CH10"/>
    <property type="match status" value="1"/>
</dbReference>
<dbReference type="InterPro" id="IPR020818">
    <property type="entry name" value="Chaperonin_GroES"/>
</dbReference>
<dbReference type="InterPro" id="IPR037124">
    <property type="entry name" value="Chaperonin_GroES_sf"/>
</dbReference>
<dbReference type="InterPro" id="IPR018369">
    <property type="entry name" value="Chaprnonin_Cpn10_CS"/>
</dbReference>
<dbReference type="InterPro" id="IPR011032">
    <property type="entry name" value="GroES-like_sf"/>
</dbReference>
<dbReference type="NCBIfam" id="NF001527">
    <property type="entry name" value="PRK00364.1-2"/>
    <property type="match status" value="1"/>
</dbReference>
<dbReference type="NCBIfam" id="NF001530">
    <property type="entry name" value="PRK00364.1-6"/>
    <property type="match status" value="1"/>
</dbReference>
<dbReference type="NCBIfam" id="NF001531">
    <property type="entry name" value="PRK00364.2-2"/>
    <property type="match status" value="1"/>
</dbReference>
<dbReference type="NCBIfam" id="NF001533">
    <property type="entry name" value="PRK00364.2-4"/>
    <property type="match status" value="1"/>
</dbReference>
<dbReference type="NCBIfam" id="NF001534">
    <property type="entry name" value="PRK00364.2-5"/>
    <property type="match status" value="1"/>
</dbReference>
<dbReference type="PANTHER" id="PTHR10772">
    <property type="entry name" value="10 KDA HEAT SHOCK PROTEIN"/>
    <property type="match status" value="1"/>
</dbReference>
<dbReference type="PANTHER" id="PTHR10772:SF58">
    <property type="entry name" value="CO-CHAPERONIN GROES"/>
    <property type="match status" value="1"/>
</dbReference>
<dbReference type="Pfam" id="PF00166">
    <property type="entry name" value="Cpn10"/>
    <property type="match status" value="1"/>
</dbReference>
<dbReference type="PRINTS" id="PR00297">
    <property type="entry name" value="CHAPERONIN10"/>
</dbReference>
<dbReference type="SMART" id="SM00883">
    <property type="entry name" value="Cpn10"/>
    <property type="match status" value="1"/>
</dbReference>
<dbReference type="SUPFAM" id="SSF50129">
    <property type="entry name" value="GroES-like"/>
    <property type="match status" value="1"/>
</dbReference>
<dbReference type="PROSITE" id="PS00681">
    <property type="entry name" value="CHAPERONINS_CPN10"/>
    <property type="match status" value="1"/>
</dbReference>
<gene>
    <name evidence="1" type="primary">groES</name>
    <name evidence="1" type="synonym">groS</name>
    <name type="ordered locus">CYA_1406</name>
</gene>
<sequence>MAAVTLNVSTLKPLGDRVLVKIAQQDEKTAGGIFLPDTAKEKPQVGEVVAVGPGKRNDEGKLIPMELKAGDRVLYSKYAGTEVKLGSDEYVLLAERDILAIVQ</sequence>
<comment type="function">
    <text evidence="1">Together with the chaperonin GroEL, plays an essential role in assisting protein folding. The GroEL-GroES system forms a nano-cage that allows encapsulation of the non-native substrate proteins and provides a physical environment optimized to promote and accelerate protein folding. GroES binds to the apical surface of the GroEL ring, thereby capping the opening of the GroEL channel.</text>
</comment>
<comment type="subunit">
    <text evidence="1">Heptamer of 7 subunits arranged in a ring. Interacts with the chaperonin GroEL.</text>
</comment>
<comment type="subcellular location">
    <subcellularLocation>
        <location evidence="1">Cytoplasm</location>
    </subcellularLocation>
</comment>
<comment type="similarity">
    <text evidence="1">Belongs to the GroES chaperonin family.</text>
</comment>
<name>CH10_SYNJA</name>
<reference key="1">
    <citation type="journal article" date="2007" name="ISME J.">
        <title>Population level functional diversity in a microbial community revealed by comparative genomic and metagenomic analyses.</title>
        <authorList>
            <person name="Bhaya D."/>
            <person name="Grossman A.R."/>
            <person name="Steunou A.-S."/>
            <person name="Khuri N."/>
            <person name="Cohan F.M."/>
            <person name="Hamamura N."/>
            <person name="Melendrez M.C."/>
            <person name="Bateson M.M."/>
            <person name="Ward D.M."/>
            <person name="Heidelberg J.F."/>
        </authorList>
    </citation>
    <scope>NUCLEOTIDE SEQUENCE [LARGE SCALE GENOMIC DNA]</scope>
    <source>
        <strain>JA-3-3Ab</strain>
    </source>
</reference>
<evidence type="ECO:0000255" key="1">
    <source>
        <dbReference type="HAMAP-Rule" id="MF_00580"/>
    </source>
</evidence>
<feature type="chain" id="PRO_1000025384" description="Co-chaperonin GroES">
    <location>
        <begin position="1"/>
        <end position="103"/>
    </location>
</feature>